<sequence>MKIRTSVKVICDKCKLIKRFGIIRVICVNPKHKQRQG</sequence>
<keyword id="KW-1185">Reference proteome</keyword>
<keyword id="KW-0687">Ribonucleoprotein</keyword>
<keyword id="KW-0689">Ribosomal protein</keyword>
<feature type="chain" id="PRO_0000126288" description="Large ribosomal subunit protein bL36">
    <location>
        <begin position="1"/>
        <end position="37"/>
    </location>
</feature>
<name>RL36_TREPA</name>
<reference key="1">
    <citation type="journal article" date="1998" name="Science">
        <title>Complete genome sequence of Treponema pallidum, the syphilis spirochete.</title>
        <authorList>
            <person name="Fraser C.M."/>
            <person name="Norris S.J."/>
            <person name="Weinstock G.M."/>
            <person name="White O."/>
            <person name="Sutton G.G."/>
            <person name="Dodson R.J."/>
            <person name="Gwinn M.L."/>
            <person name="Hickey E.K."/>
            <person name="Clayton R.A."/>
            <person name="Ketchum K.A."/>
            <person name="Sodergren E."/>
            <person name="Hardham J.M."/>
            <person name="McLeod M.P."/>
            <person name="Salzberg S.L."/>
            <person name="Peterson J.D."/>
            <person name="Khalak H.G."/>
            <person name="Richardson D.L."/>
            <person name="Howell J.K."/>
            <person name="Chidambaram M."/>
            <person name="Utterback T.R."/>
            <person name="McDonald L.A."/>
            <person name="Artiach P."/>
            <person name="Bowman C."/>
            <person name="Cotton M.D."/>
            <person name="Fujii C."/>
            <person name="Garland S.A."/>
            <person name="Hatch B."/>
            <person name="Horst K."/>
            <person name="Roberts K.M."/>
            <person name="Sandusky M."/>
            <person name="Weidman J.F."/>
            <person name="Smith H.O."/>
            <person name="Venter J.C."/>
        </authorList>
    </citation>
    <scope>NUCLEOTIDE SEQUENCE [LARGE SCALE GENOMIC DNA]</scope>
    <source>
        <strain>Nichols</strain>
    </source>
</reference>
<organism>
    <name type="scientific">Treponema pallidum (strain Nichols)</name>
    <dbReference type="NCBI Taxonomy" id="243276"/>
    <lineage>
        <taxon>Bacteria</taxon>
        <taxon>Pseudomonadati</taxon>
        <taxon>Spirochaetota</taxon>
        <taxon>Spirochaetia</taxon>
        <taxon>Spirochaetales</taxon>
        <taxon>Treponemataceae</taxon>
        <taxon>Treponema</taxon>
    </lineage>
</organism>
<evidence type="ECO:0000255" key="1">
    <source>
        <dbReference type="HAMAP-Rule" id="MF_00251"/>
    </source>
</evidence>
<evidence type="ECO:0000305" key="2"/>
<gene>
    <name evidence="1" type="primary">rpmJ</name>
    <name type="ordered locus">TP_0209</name>
</gene>
<accession>O83239</accession>
<comment type="similarity">
    <text evidence="1">Belongs to the bacterial ribosomal protein bL36 family.</text>
</comment>
<protein>
    <recommendedName>
        <fullName evidence="1">Large ribosomal subunit protein bL36</fullName>
    </recommendedName>
    <alternativeName>
        <fullName evidence="2">50S ribosomal protein L36</fullName>
    </alternativeName>
</protein>
<dbReference type="EMBL" id="AE000520">
    <property type="protein sequence ID" value="AAC65209.1"/>
    <property type="molecule type" value="Genomic_DNA"/>
</dbReference>
<dbReference type="PIR" id="G71351">
    <property type="entry name" value="G71351"/>
</dbReference>
<dbReference type="RefSeq" id="WP_010881657.1">
    <property type="nucleotide sequence ID" value="NC_021490.2"/>
</dbReference>
<dbReference type="SMR" id="O83239"/>
<dbReference type="IntAct" id="O83239">
    <property type="interactions" value="33"/>
</dbReference>
<dbReference type="STRING" id="243276.TP_0209"/>
<dbReference type="EnsemblBacteria" id="AAC65209">
    <property type="protein sequence ID" value="AAC65209"/>
    <property type="gene ID" value="TP_0209"/>
</dbReference>
<dbReference type="GeneID" id="93875997"/>
<dbReference type="KEGG" id="tpa:TP_0209"/>
<dbReference type="HOGENOM" id="CLU_135723_6_2_12"/>
<dbReference type="OrthoDB" id="9802520at2"/>
<dbReference type="Proteomes" id="UP000000811">
    <property type="component" value="Chromosome"/>
</dbReference>
<dbReference type="GO" id="GO:0005737">
    <property type="term" value="C:cytoplasm"/>
    <property type="evidence" value="ECO:0007669"/>
    <property type="project" value="UniProtKB-ARBA"/>
</dbReference>
<dbReference type="GO" id="GO:1990904">
    <property type="term" value="C:ribonucleoprotein complex"/>
    <property type="evidence" value="ECO:0007669"/>
    <property type="project" value="UniProtKB-KW"/>
</dbReference>
<dbReference type="GO" id="GO:0005840">
    <property type="term" value="C:ribosome"/>
    <property type="evidence" value="ECO:0007669"/>
    <property type="project" value="UniProtKB-KW"/>
</dbReference>
<dbReference type="GO" id="GO:0003735">
    <property type="term" value="F:structural constituent of ribosome"/>
    <property type="evidence" value="ECO:0007669"/>
    <property type="project" value="InterPro"/>
</dbReference>
<dbReference type="GO" id="GO:0006412">
    <property type="term" value="P:translation"/>
    <property type="evidence" value="ECO:0007669"/>
    <property type="project" value="UniProtKB-UniRule"/>
</dbReference>
<dbReference type="HAMAP" id="MF_00251">
    <property type="entry name" value="Ribosomal_bL36"/>
    <property type="match status" value="1"/>
</dbReference>
<dbReference type="InterPro" id="IPR000473">
    <property type="entry name" value="Ribosomal_bL36"/>
</dbReference>
<dbReference type="InterPro" id="IPR035977">
    <property type="entry name" value="Ribosomal_bL36_sp"/>
</dbReference>
<dbReference type="NCBIfam" id="TIGR01022">
    <property type="entry name" value="rpmJ_bact"/>
    <property type="match status" value="1"/>
</dbReference>
<dbReference type="PANTHER" id="PTHR42888">
    <property type="entry name" value="50S RIBOSOMAL PROTEIN L36, CHLOROPLASTIC"/>
    <property type="match status" value="1"/>
</dbReference>
<dbReference type="PANTHER" id="PTHR42888:SF1">
    <property type="entry name" value="LARGE RIBOSOMAL SUBUNIT PROTEIN BL36C"/>
    <property type="match status" value="1"/>
</dbReference>
<dbReference type="Pfam" id="PF00444">
    <property type="entry name" value="Ribosomal_L36"/>
    <property type="match status" value="1"/>
</dbReference>
<dbReference type="SUPFAM" id="SSF57840">
    <property type="entry name" value="Ribosomal protein L36"/>
    <property type="match status" value="1"/>
</dbReference>
<dbReference type="PROSITE" id="PS00828">
    <property type="entry name" value="RIBOSOMAL_L36"/>
    <property type="match status" value="1"/>
</dbReference>
<proteinExistence type="inferred from homology"/>